<accession>Q8A9K9</accession>
<organism>
    <name type="scientific">Bacteroides thetaiotaomicron (strain ATCC 29148 / DSM 2079 / JCM 5827 / CCUG 10774 / NCTC 10582 / VPI-5482 / E50)</name>
    <dbReference type="NCBI Taxonomy" id="226186"/>
    <lineage>
        <taxon>Bacteria</taxon>
        <taxon>Pseudomonadati</taxon>
        <taxon>Bacteroidota</taxon>
        <taxon>Bacteroidia</taxon>
        <taxon>Bacteroidales</taxon>
        <taxon>Bacteroidaceae</taxon>
        <taxon>Bacteroides</taxon>
    </lineage>
</organism>
<gene>
    <name evidence="1" type="primary">ileS</name>
    <name type="ordered locus">BT_0806</name>
</gene>
<dbReference type="EC" id="6.1.1.5" evidence="1"/>
<dbReference type="EMBL" id="AE015928">
    <property type="protein sequence ID" value="AAO75913.1"/>
    <property type="molecule type" value="Genomic_DNA"/>
</dbReference>
<dbReference type="RefSeq" id="NP_809719.1">
    <property type="nucleotide sequence ID" value="NC_004663.1"/>
</dbReference>
<dbReference type="RefSeq" id="WP_011107458.1">
    <property type="nucleotide sequence ID" value="NC_004663.1"/>
</dbReference>
<dbReference type="SMR" id="Q8A9K9"/>
<dbReference type="FunCoup" id="Q8A9K9">
    <property type="interactions" value="504"/>
</dbReference>
<dbReference type="STRING" id="226186.BT_0806"/>
<dbReference type="PaxDb" id="226186-BT_0806"/>
<dbReference type="EnsemblBacteria" id="AAO75913">
    <property type="protein sequence ID" value="AAO75913"/>
    <property type="gene ID" value="BT_0806"/>
</dbReference>
<dbReference type="GeneID" id="60926775"/>
<dbReference type="KEGG" id="bth:BT_0806"/>
<dbReference type="PATRIC" id="fig|226186.12.peg.824"/>
<dbReference type="eggNOG" id="COG0060">
    <property type="taxonomic scope" value="Bacteria"/>
</dbReference>
<dbReference type="HOGENOM" id="CLU_001493_1_1_10"/>
<dbReference type="InParanoid" id="Q8A9K9"/>
<dbReference type="OrthoDB" id="9810365at2"/>
<dbReference type="Proteomes" id="UP000001414">
    <property type="component" value="Chromosome"/>
</dbReference>
<dbReference type="GO" id="GO:0005737">
    <property type="term" value="C:cytoplasm"/>
    <property type="evidence" value="ECO:0007669"/>
    <property type="project" value="UniProtKB-SubCell"/>
</dbReference>
<dbReference type="GO" id="GO:0002161">
    <property type="term" value="F:aminoacyl-tRNA deacylase activity"/>
    <property type="evidence" value="ECO:0007669"/>
    <property type="project" value="InterPro"/>
</dbReference>
<dbReference type="GO" id="GO:0005524">
    <property type="term" value="F:ATP binding"/>
    <property type="evidence" value="ECO:0007669"/>
    <property type="project" value="UniProtKB-UniRule"/>
</dbReference>
<dbReference type="GO" id="GO:0004822">
    <property type="term" value="F:isoleucine-tRNA ligase activity"/>
    <property type="evidence" value="ECO:0000318"/>
    <property type="project" value="GO_Central"/>
</dbReference>
<dbReference type="GO" id="GO:0000049">
    <property type="term" value="F:tRNA binding"/>
    <property type="evidence" value="ECO:0007669"/>
    <property type="project" value="InterPro"/>
</dbReference>
<dbReference type="GO" id="GO:0008270">
    <property type="term" value="F:zinc ion binding"/>
    <property type="evidence" value="ECO:0007669"/>
    <property type="project" value="UniProtKB-UniRule"/>
</dbReference>
<dbReference type="GO" id="GO:0006428">
    <property type="term" value="P:isoleucyl-tRNA aminoacylation"/>
    <property type="evidence" value="ECO:0000318"/>
    <property type="project" value="GO_Central"/>
</dbReference>
<dbReference type="CDD" id="cd07961">
    <property type="entry name" value="Anticodon_Ia_Ile_ABEc"/>
    <property type="match status" value="1"/>
</dbReference>
<dbReference type="CDD" id="cd00818">
    <property type="entry name" value="IleRS_core"/>
    <property type="match status" value="1"/>
</dbReference>
<dbReference type="FunFam" id="1.10.730.10:FF:000036">
    <property type="entry name" value="Isoleucine--tRNA ligase"/>
    <property type="match status" value="1"/>
</dbReference>
<dbReference type="FunFam" id="3.40.50.620:FF:000175">
    <property type="entry name" value="Isoleucine--tRNA ligase"/>
    <property type="match status" value="1"/>
</dbReference>
<dbReference type="FunFam" id="3.40.50.620:FF:000205">
    <property type="entry name" value="Isoleucine--tRNA ligase"/>
    <property type="match status" value="1"/>
</dbReference>
<dbReference type="Gene3D" id="3.30.720.200">
    <property type="match status" value="1"/>
</dbReference>
<dbReference type="Gene3D" id="3.40.50.620">
    <property type="entry name" value="HUPs"/>
    <property type="match status" value="2"/>
</dbReference>
<dbReference type="Gene3D" id="1.10.730.10">
    <property type="entry name" value="Isoleucyl-tRNA Synthetase, Domain 1"/>
    <property type="match status" value="1"/>
</dbReference>
<dbReference type="HAMAP" id="MF_02003">
    <property type="entry name" value="Ile_tRNA_synth_type2"/>
    <property type="match status" value="1"/>
</dbReference>
<dbReference type="InterPro" id="IPR002300">
    <property type="entry name" value="aa-tRNA-synth_Ia"/>
</dbReference>
<dbReference type="InterPro" id="IPR033709">
    <property type="entry name" value="Anticodon_Ile_ABEc"/>
</dbReference>
<dbReference type="InterPro" id="IPR002301">
    <property type="entry name" value="Ile-tRNA-ligase"/>
</dbReference>
<dbReference type="InterPro" id="IPR023586">
    <property type="entry name" value="Ile-tRNA-ligase_type2"/>
</dbReference>
<dbReference type="InterPro" id="IPR013155">
    <property type="entry name" value="M/V/L/I-tRNA-synth_anticd-bd"/>
</dbReference>
<dbReference type="InterPro" id="IPR014729">
    <property type="entry name" value="Rossmann-like_a/b/a_fold"/>
</dbReference>
<dbReference type="InterPro" id="IPR009080">
    <property type="entry name" value="tRNAsynth_Ia_anticodon-bd"/>
</dbReference>
<dbReference type="InterPro" id="IPR009008">
    <property type="entry name" value="Val/Leu/Ile-tRNA-synth_edit"/>
</dbReference>
<dbReference type="NCBIfam" id="TIGR00392">
    <property type="entry name" value="ileS"/>
    <property type="match status" value="1"/>
</dbReference>
<dbReference type="PANTHER" id="PTHR42780:SF1">
    <property type="entry name" value="ISOLEUCINE--TRNA LIGASE, CYTOPLASMIC"/>
    <property type="match status" value="1"/>
</dbReference>
<dbReference type="PANTHER" id="PTHR42780">
    <property type="entry name" value="SOLEUCYL-TRNA SYNTHETASE"/>
    <property type="match status" value="1"/>
</dbReference>
<dbReference type="Pfam" id="PF08264">
    <property type="entry name" value="Anticodon_1"/>
    <property type="match status" value="1"/>
</dbReference>
<dbReference type="Pfam" id="PF19302">
    <property type="entry name" value="DUF5915"/>
    <property type="match status" value="1"/>
</dbReference>
<dbReference type="Pfam" id="PF00133">
    <property type="entry name" value="tRNA-synt_1"/>
    <property type="match status" value="1"/>
</dbReference>
<dbReference type="PRINTS" id="PR00984">
    <property type="entry name" value="TRNASYNTHILE"/>
</dbReference>
<dbReference type="SUPFAM" id="SSF47323">
    <property type="entry name" value="Anticodon-binding domain of a subclass of class I aminoacyl-tRNA synthetases"/>
    <property type="match status" value="1"/>
</dbReference>
<dbReference type="SUPFAM" id="SSF52374">
    <property type="entry name" value="Nucleotidylyl transferase"/>
    <property type="match status" value="1"/>
</dbReference>
<dbReference type="SUPFAM" id="SSF50677">
    <property type="entry name" value="ValRS/IleRS/LeuRS editing domain"/>
    <property type="match status" value="1"/>
</dbReference>
<reference key="1">
    <citation type="journal article" date="2003" name="Science">
        <title>A genomic view of the human-Bacteroides thetaiotaomicron symbiosis.</title>
        <authorList>
            <person name="Xu J."/>
            <person name="Bjursell M.K."/>
            <person name="Himrod J."/>
            <person name="Deng S."/>
            <person name="Carmichael L.K."/>
            <person name="Chiang H.C."/>
            <person name="Hooper L.V."/>
            <person name="Gordon J.I."/>
        </authorList>
    </citation>
    <scope>NUCLEOTIDE SEQUENCE [LARGE SCALE GENOMIC DNA]</scope>
    <source>
        <strain>ATCC 29148 / DSM 2079 / JCM 5827 / CCUG 10774 / NCTC 10582 / VPI-5482 / E50</strain>
    </source>
</reference>
<name>SYI_BACTN</name>
<feature type="chain" id="PRO_0000098522" description="Isoleucine--tRNA ligase">
    <location>
        <begin position="1"/>
        <end position="1162"/>
    </location>
</feature>
<feature type="short sequence motif" description="'HIGH' region">
    <location>
        <begin position="50"/>
        <end position="60"/>
    </location>
</feature>
<feature type="short sequence motif" description="'KMSKS' region">
    <location>
        <begin position="710"/>
        <end position="714"/>
    </location>
</feature>
<feature type="binding site" evidence="1">
    <location>
        <position position="713"/>
    </location>
    <ligand>
        <name>ATP</name>
        <dbReference type="ChEBI" id="CHEBI:30616"/>
    </ligand>
</feature>
<sequence>MGKRFTEYSQFDLSQVNKDVLKKWDENQVFAKSMTERDGCPSFVFFEGPPSANGMPGIHHVMARTIKDIFCRYKTMKGYQVKRKAGWDTHGLPVELSVEKALGITKEDIGKKISVADYNAACRKDVMKYTKEWEDLTHQMGYWVDMKHPYITYDNRYIETLWWLLKQLHKKGLLYKGYTIQPYSPAAGTGLSSHELNQPGCYRDVKDTTAVAQFKMKNPKPEMAEWGTPYFLAWTTTPWTLPSNTALCVGPKIDYVAVQTYNAYTGEPITVVLAKALLNTHFNSKAADLKLEDYKAGDKLVPFKVVAEYKGADLIGMEYEQLIPWVKPVEVSEDGTWKVSGKGFRVIPGDYVTTEDGTGIVHIAPTFGADDANVARAAGIPSLFMINKKGETRPMVDLTGKFYMLDELDENFVKECVDVDKYKEYQGAWVKNAYNPVFMVDGKYDEKAAQAAESLDVALCMMMKANNQAFKIEKHIHNYPHCWRTDKPVLYYPLDSWFIRSTACKERMMELNKTINWKPESTGTGRFGKWLENLNDWNLSRSRYWGTPLPIWRTEDGTSEICIESVEELYNEIEKSVAAGFMKSNPYKDKGFVPGEYTEGNYDKIDLHRPYVDDIILVSEDGQPMKRESDLIDVWFDSGAMPYAQIHYPFENKNILDNREVYPADFIAEGVDQTRGWFFTLHAIATMVFDSVSYKAVISNGLVLDKNGNKMSKRLNNAVDPFTTIEKYGSDPLRWYMITNSSPWDNLKFDIDGIEEVRRKFFGTLYNTYSFFALYANVDGFEYKEADVPMAERPEIDRWILSVLNTLIKEVDTCYNEYEPTKAGRLISDFVNDNLSNWYVRLNRKRFWGGEFTQDKLSAYQTLYTCLETVAKLMAPISPFYADRLYTDLTTATGRDNVVSIHLAEFPKYQEEMIDKELEARMQMAQDVTSMVLALRRKVNIKVRQPLQCIMIPVADEEQKAHIEAVKALIMNEVNVKDIKFVDGAAGVLVKKVKCDFKKLGPKFGKQMKAVAAAVAEMSQEAIAELEKNGKYALNLDGAEAVIEAADVEIFSEDIPGWLVANEGKLTVALEVTVTEELRREGIARELVNRIQNIRKSSGFEITDKIKITISKNTQTDDAVNEYNTYICNQVLGTSLDLADEVKDGTELNFDDFSLFVNVIKD</sequence>
<evidence type="ECO:0000255" key="1">
    <source>
        <dbReference type="HAMAP-Rule" id="MF_02003"/>
    </source>
</evidence>
<keyword id="KW-0030">Aminoacyl-tRNA synthetase</keyword>
<keyword id="KW-0067">ATP-binding</keyword>
<keyword id="KW-0963">Cytoplasm</keyword>
<keyword id="KW-0436">Ligase</keyword>
<keyword id="KW-0479">Metal-binding</keyword>
<keyword id="KW-0547">Nucleotide-binding</keyword>
<keyword id="KW-0648">Protein biosynthesis</keyword>
<keyword id="KW-1185">Reference proteome</keyword>
<keyword id="KW-0862">Zinc</keyword>
<comment type="function">
    <text evidence="1">Catalyzes the attachment of isoleucine to tRNA(Ile). As IleRS can inadvertently accommodate and process structurally similar amino acids such as valine, to avoid such errors it has two additional distinct tRNA(Ile)-dependent editing activities. One activity is designated as 'pretransfer' editing and involves the hydrolysis of activated Val-AMP. The other activity is designated 'posttransfer' editing and involves deacylation of mischarged Val-tRNA(Ile).</text>
</comment>
<comment type="catalytic activity">
    <reaction evidence="1">
        <text>tRNA(Ile) + L-isoleucine + ATP = L-isoleucyl-tRNA(Ile) + AMP + diphosphate</text>
        <dbReference type="Rhea" id="RHEA:11060"/>
        <dbReference type="Rhea" id="RHEA-COMP:9666"/>
        <dbReference type="Rhea" id="RHEA-COMP:9695"/>
        <dbReference type="ChEBI" id="CHEBI:30616"/>
        <dbReference type="ChEBI" id="CHEBI:33019"/>
        <dbReference type="ChEBI" id="CHEBI:58045"/>
        <dbReference type="ChEBI" id="CHEBI:78442"/>
        <dbReference type="ChEBI" id="CHEBI:78528"/>
        <dbReference type="ChEBI" id="CHEBI:456215"/>
        <dbReference type="EC" id="6.1.1.5"/>
    </reaction>
</comment>
<comment type="cofactor">
    <cofactor evidence="1">
        <name>Zn(2+)</name>
        <dbReference type="ChEBI" id="CHEBI:29105"/>
    </cofactor>
</comment>
<comment type="subunit">
    <text evidence="1">Monomer.</text>
</comment>
<comment type="subcellular location">
    <subcellularLocation>
        <location evidence="1">Cytoplasm</location>
    </subcellularLocation>
</comment>
<comment type="domain">
    <text evidence="1">IleRS has two distinct active sites: one for aminoacylation and one for editing. The misactivated valine is translocated from the active site to the editing site, which sterically excludes the correctly activated isoleucine. The single editing site contains two valyl binding pockets, one specific for each substrate (Val-AMP or Val-tRNA(Ile)).</text>
</comment>
<comment type="similarity">
    <text evidence="1">Belongs to the class-I aminoacyl-tRNA synthetase family. IleS type 2 subfamily.</text>
</comment>
<protein>
    <recommendedName>
        <fullName evidence="1">Isoleucine--tRNA ligase</fullName>
        <ecNumber evidence="1">6.1.1.5</ecNumber>
    </recommendedName>
    <alternativeName>
        <fullName evidence="1">Isoleucyl-tRNA synthetase</fullName>
        <shortName evidence="1">IleRS</shortName>
    </alternativeName>
</protein>
<proteinExistence type="inferred from homology"/>